<protein>
    <recommendedName>
        <fullName evidence="1">Arginine--tRNA ligase</fullName>
        <ecNumber evidence="1">6.1.1.19</ecNumber>
    </recommendedName>
    <alternativeName>
        <fullName evidence="1">Arginyl-tRNA synthetase</fullName>
        <shortName evidence="1">ArgRS</shortName>
    </alternativeName>
</protein>
<sequence length="583" mass="67796">MNIQYLLLQRVHEALTLINTKSFLNLIQVQQSNHIRFGDYQINGMINISKHLQIPIKDFSNIFIKTINLKGIAKIIKFEPPGFINIFLSPTWIENKINHIIDLPKLGIDLIPSKNIVIDYSSPNIAKEMHVGHLRSTIIGDSIARILSFLGHNVIRSNHIGDWGTQFGMLIAYIKKHKINYLSLNDSQQISMLEYYYQESKKEYDSDPNFAELSRKYVVKLQKGDVYCRKIWKYLVDISISNNQKIYDRLNVTLKKKDIMGESMYHDMLPYIITDLKNKKLAVTSDHATIVFLNQNKNSKKNNPFGVIIQKKDGGYLYSTTDIACIKYRCETLHADRIIYYIDSRQKQHLMQAWEIAYQAGYITKAVVFEHHVCGMLLDKNKKPFKTRSGNTIKLITLLNEAFNKAYNLILNKNLNLEYKKINHLAHIISIGAIKYSELSKNRTTNYIFNWDKILNFDGNTAPYIQYAYTRISSIFKKINHRSELQEKKYQIFLSSQEEILLAICLLQFHETLITVADRGTPHILCGYLYKLSTLFSLFYEHCPILKTECTYTKYSRLKLSFITAQILKKGLNLLGIETSEYM</sequence>
<accession>Q7VQX7</accession>
<proteinExistence type="inferred from homology"/>
<evidence type="ECO:0000255" key="1">
    <source>
        <dbReference type="HAMAP-Rule" id="MF_00123"/>
    </source>
</evidence>
<comment type="catalytic activity">
    <reaction evidence="1">
        <text>tRNA(Arg) + L-arginine + ATP = L-arginyl-tRNA(Arg) + AMP + diphosphate</text>
        <dbReference type="Rhea" id="RHEA:20301"/>
        <dbReference type="Rhea" id="RHEA-COMP:9658"/>
        <dbReference type="Rhea" id="RHEA-COMP:9673"/>
        <dbReference type="ChEBI" id="CHEBI:30616"/>
        <dbReference type="ChEBI" id="CHEBI:32682"/>
        <dbReference type="ChEBI" id="CHEBI:33019"/>
        <dbReference type="ChEBI" id="CHEBI:78442"/>
        <dbReference type="ChEBI" id="CHEBI:78513"/>
        <dbReference type="ChEBI" id="CHEBI:456215"/>
        <dbReference type="EC" id="6.1.1.19"/>
    </reaction>
</comment>
<comment type="subunit">
    <text evidence="1">Monomer.</text>
</comment>
<comment type="subcellular location">
    <subcellularLocation>
        <location evidence="1">Cytoplasm</location>
    </subcellularLocation>
</comment>
<comment type="similarity">
    <text evidence="1">Belongs to the class-I aminoacyl-tRNA synthetase family.</text>
</comment>
<reference key="1">
    <citation type="journal article" date="2003" name="Proc. Natl. Acad. Sci. U.S.A.">
        <title>The genome sequence of Blochmannia floridanus: comparative analysis of reduced genomes.</title>
        <authorList>
            <person name="Gil R."/>
            <person name="Silva F.J."/>
            <person name="Zientz E."/>
            <person name="Delmotte F."/>
            <person name="Gonzalez-Candelas F."/>
            <person name="Latorre A."/>
            <person name="Rausell C."/>
            <person name="Kamerbeek J."/>
            <person name="Gadau J."/>
            <person name="Hoelldobler B."/>
            <person name="van Ham R.C.H.J."/>
            <person name="Gross R."/>
            <person name="Moya A."/>
        </authorList>
    </citation>
    <scope>NUCLEOTIDE SEQUENCE [LARGE SCALE GENOMIC DNA]</scope>
</reference>
<feature type="chain" id="PRO_0000151542" description="Arginine--tRNA ligase">
    <location>
        <begin position="1"/>
        <end position="583"/>
    </location>
</feature>
<feature type="short sequence motif" description="'HIGH' region">
    <location>
        <begin position="123"/>
        <end position="133"/>
    </location>
</feature>
<gene>
    <name evidence="1" type="primary">argS</name>
    <name type="ordered locus">Bfl453</name>
</gene>
<keyword id="KW-0030">Aminoacyl-tRNA synthetase</keyword>
<keyword id="KW-0067">ATP-binding</keyword>
<keyword id="KW-0963">Cytoplasm</keyword>
<keyword id="KW-0436">Ligase</keyword>
<keyword id="KW-0547">Nucleotide-binding</keyword>
<keyword id="KW-0648">Protein biosynthesis</keyword>
<keyword id="KW-1185">Reference proteome</keyword>
<dbReference type="EC" id="6.1.1.19" evidence="1"/>
<dbReference type="EMBL" id="BX248583">
    <property type="protein sequence ID" value="CAD83515.1"/>
    <property type="molecule type" value="Genomic_DNA"/>
</dbReference>
<dbReference type="SMR" id="Q7VQX7"/>
<dbReference type="STRING" id="203907.Bfl453"/>
<dbReference type="KEGG" id="bfl:Bfl453"/>
<dbReference type="eggNOG" id="COG0018">
    <property type="taxonomic scope" value="Bacteria"/>
</dbReference>
<dbReference type="HOGENOM" id="CLU_006406_5_1_6"/>
<dbReference type="OrthoDB" id="9803211at2"/>
<dbReference type="Proteomes" id="UP000002192">
    <property type="component" value="Chromosome"/>
</dbReference>
<dbReference type="GO" id="GO:0005737">
    <property type="term" value="C:cytoplasm"/>
    <property type="evidence" value="ECO:0007669"/>
    <property type="project" value="UniProtKB-SubCell"/>
</dbReference>
<dbReference type="GO" id="GO:0004814">
    <property type="term" value="F:arginine-tRNA ligase activity"/>
    <property type="evidence" value="ECO:0007669"/>
    <property type="project" value="UniProtKB-UniRule"/>
</dbReference>
<dbReference type="GO" id="GO:0005524">
    <property type="term" value="F:ATP binding"/>
    <property type="evidence" value="ECO:0007669"/>
    <property type="project" value="UniProtKB-UniRule"/>
</dbReference>
<dbReference type="GO" id="GO:0006420">
    <property type="term" value="P:arginyl-tRNA aminoacylation"/>
    <property type="evidence" value="ECO:0007669"/>
    <property type="project" value="UniProtKB-UniRule"/>
</dbReference>
<dbReference type="CDD" id="cd07956">
    <property type="entry name" value="Anticodon_Ia_Arg"/>
    <property type="match status" value="1"/>
</dbReference>
<dbReference type="CDD" id="cd00671">
    <property type="entry name" value="ArgRS_core"/>
    <property type="match status" value="1"/>
</dbReference>
<dbReference type="FunFam" id="3.40.50.620:FF:000030">
    <property type="entry name" value="Arginine--tRNA ligase"/>
    <property type="match status" value="1"/>
</dbReference>
<dbReference type="FunFam" id="1.10.730.10:FF:000006">
    <property type="entry name" value="Arginyl-tRNA synthetase 2, mitochondrial"/>
    <property type="match status" value="1"/>
</dbReference>
<dbReference type="Gene3D" id="3.30.1360.70">
    <property type="entry name" value="Arginyl tRNA synthetase N-terminal domain"/>
    <property type="match status" value="1"/>
</dbReference>
<dbReference type="Gene3D" id="3.40.50.620">
    <property type="entry name" value="HUPs"/>
    <property type="match status" value="1"/>
</dbReference>
<dbReference type="Gene3D" id="1.10.730.10">
    <property type="entry name" value="Isoleucyl-tRNA Synthetase, Domain 1"/>
    <property type="match status" value="1"/>
</dbReference>
<dbReference type="HAMAP" id="MF_00123">
    <property type="entry name" value="Arg_tRNA_synth"/>
    <property type="match status" value="1"/>
</dbReference>
<dbReference type="InterPro" id="IPR001412">
    <property type="entry name" value="aa-tRNA-synth_I_CS"/>
</dbReference>
<dbReference type="InterPro" id="IPR001278">
    <property type="entry name" value="Arg-tRNA-ligase"/>
</dbReference>
<dbReference type="InterPro" id="IPR005148">
    <property type="entry name" value="Arg-tRNA-synth_N"/>
</dbReference>
<dbReference type="InterPro" id="IPR036695">
    <property type="entry name" value="Arg-tRNA-synth_N_sf"/>
</dbReference>
<dbReference type="InterPro" id="IPR035684">
    <property type="entry name" value="ArgRS_core"/>
</dbReference>
<dbReference type="InterPro" id="IPR008909">
    <property type="entry name" value="DALR_anticod-bd"/>
</dbReference>
<dbReference type="InterPro" id="IPR014729">
    <property type="entry name" value="Rossmann-like_a/b/a_fold"/>
</dbReference>
<dbReference type="InterPro" id="IPR009080">
    <property type="entry name" value="tRNAsynth_Ia_anticodon-bd"/>
</dbReference>
<dbReference type="NCBIfam" id="TIGR00456">
    <property type="entry name" value="argS"/>
    <property type="match status" value="1"/>
</dbReference>
<dbReference type="PANTHER" id="PTHR11956:SF5">
    <property type="entry name" value="ARGININE--TRNA LIGASE, CYTOPLASMIC"/>
    <property type="match status" value="1"/>
</dbReference>
<dbReference type="PANTHER" id="PTHR11956">
    <property type="entry name" value="ARGINYL-TRNA SYNTHETASE"/>
    <property type="match status" value="1"/>
</dbReference>
<dbReference type="Pfam" id="PF03485">
    <property type="entry name" value="Arg_tRNA_synt_N"/>
    <property type="match status" value="1"/>
</dbReference>
<dbReference type="Pfam" id="PF05746">
    <property type="entry name" value="DALR_1"/>
    <property type="match status" value="1"/>
</dbReference>
<dbReference type="Pfam" id="PF00750">
    <property type="entry name" value="tRNA-synt_1d"/>
    <property type="match status" value="1"/>
</dbReference>
<dbReference type="PRINTS" id="PR01038">
    <property type="entry name" value="TRNASYNTHARG"/>
</dbReference>
<dbReference type="SMART" id="SM01016">
    <property type="entry name" value="Arg_tRNA_synt_N"/>
    <property type="match status" value="1"/>
</dbReference>
<dbReference type="SMART" id="SM00836">
    <property type="entry name" value="DALR_1"/>
    <property type="match status" value="1"/>
</dbReference>
<dbReference type="SUPFAM" id="SSF47323">
    <property type="entry name" value="Anticodon-binding domain of a subclass of class I aminoacyl-tRNA synthetases"/>
    <property type="match status" value="1"/>
</dbReference>
<dbReference type="SUPFAM" id="SSF55190">
    <property type="entry name" value="Arginyl-tRNA synthetase (ArgRS), N-terminal 'additional' domain"/>
    <property type="match status" value="1"/>
</dbReference>
<dbReference type="SUPFAM" id="SSF52374">
    <property type="entry name" value="Nucleotidylyl transferase"/>
    <property type="match status" value="1"/>
</dbReference>
<dbReference type="PROSITE" id="PS00178">
    <property type="entry name" value="AA_TRNA_LIGASE_I"/>
    <property type="match status" value="1"/>
</dbReference>
<organism>
    <name type="scientific">Blochmanniella floridana</name>
    <dbReference type="NCBI Taxonomy" id="203907"/>
    <lineage>
        <taxon>Bacteria</taxon>
        <taxon>Pseudomonadati</taxon>
        <taxon>Pseudomonadota</taxon>
        <taxon>Gammaproteobacteria</taxon>
        <taxon>Enterobacterales</taxon>
        <taxon>Enterobacteriaceae</taxon>
        <taxon>ant endosymbionts</taxon>
        <taxon>Candidatus Blochmanniella</taxon>
    </lineage>
</organism>
<name>SYR_BLOFL</name>